<protein>
    <recommendedName>
        <fullName>C4-dicarboxylate transport sensor protein DctB</fullName>
        <ecNumber>2.7.13.3</ecNumber>
    </recommendedName>
</protein>
<sequence>MHHVRMVKLPAEASDPHALRSRARRSWLVFAAVALVLLAAGLLLARDYGRSQALAGLAGQSRIDASLKASLLRAVVERQRALPLVLADDAAIRGALLSPDRPSLDRINRKLEALATSAEAAVIYLIDRSGVAVAASNWQEPTSFVGNDYAFRDYFRLAVRDGMAEHFAMGTVSNRPGLYISRRVDGPGGPLGVIVAKLEFDGVEADWQASGKPAYVTDRRGIVLITSLPSWRFMTTKPIAEDRLAPIRESLQFGDAPLLPLPFRKIEARPDGSSTLDALLPGDSTAAFLRVETMVPSTNWRLEQLSPLKAPLAAGAREAQLLTLAALVPLLALAALLLRRRQVVAMRSAEERLARNALEASVEERTRDLRMARDRLETEIADHRQTTEKLQAVQQDLVQANRLAILGQVAAGVAHEINQPVATIRAYADNARTFLHRGQTVTAAENMESIAELTERVGAITDELRRFARKGHFAAGPTAMKEVVEGALMLLRSRFAGRMDAIRLDLPPDGLQALGNRIRLEQVLINLLQNALEAIGDSEDGAIQVRCEEAAGGIALTVADNGPGIAADVREELFTPFNTSKEDGLGLGLAISKEIVSDYGGTIEVESGPSGTTFAVNLKKA</sequence>
<geneLocation type="plasmid">
    <name>pSymB</name>
    <name>megaplasmid 2</name>
</geneLocation>
<organism>
    <name type="scientific">Rhizobium meliloti (strain 1021)</name>
    <name type="common">Ensifer meliloti</name>
    <name type="synonym">Sinorhizobium meliloti</name>
    <dbReference type="NCBI Taxonomy" id="266834"/>
    <lineage>
        <taxon>Bacteria</taxon>
        <taxon>Pseudomonadati</taxon>
        <taxon>Pseudomonadota</taxon>
        <taxon>Alphaproteobacteria</taxon>
        <taxon>Hyphomicrobiales</taxon>
        <taxon>Rhizobiaceae</taxon>
        <taxon>Sinorhizobium/Ensifer group</taxon>
        <taxon>Sinorhizobium</taxon>
    </lineage>
</organism>
<keyword id="KW-0002">3D-structure</keyword>
<keyword id="KW-0067">ATP-binding</keyword>
<keyword id="KW-0997">Cell inner membrane</keyword>
<keyword id="KW-1003">Cell membrane</keyword>
<keyword id="KW-0418">Kinase</keyword>
<keyword id="KW-0472">Membrane</keyword>
<keyword id="KW-0547">Nucleotide-binding</keyword>
<keyword id="KW-0597">Phosphoprotein</keyword>
<keyword id="KW-0614">Plasmid</keyword>
<keyword id="KW-1185">Reference proteome</keyword>
<keyword id="KW-0808">Transferase</keyword>
<keyword id="KW-0812">Transmembrane</keyword>
<keyword id="KW-1133">Transmembrane helix</keyword>
<keyword id="KW-0902">Two-component regulatory system</keyword>
<feature type="chain" id="PRO_0000074748" description="C4-dicarboxylate transport sensor protein DctB">
    <location>
        <begin position="1"/>
        <end position="621"/>
    </location>
</feature>
<feature type="topological domain" description="Cytoplasmic" evidence="1">
    <location>
        <begin position="1"/>
        <end position="26"/>
    </location>
</feature>
<feature type="transmembrane region" description="Helical" evidence="1">
    <location>
        <begin position="27"/>
        <end position="45"/>
    </location>
</feature>
<feature type="topological domain" description="Periplasmic">
    <location>
        <begin position="46"/>
        <end position="320"/>
    </location>
</feature>
<feature type="transmembrane region" description="Helical" evidence="1">
    <location>
        <begin position="321"/>
        <end position="338"/>
    </location>
</feature>
<feature type="topological domain" description="Cytoplasmic" evidence="1">
    <location>
        <begin position="339"/>
        <end position="621"/>
    </location>
</feature>
<feature type="domain" description="Histidine kinase" evidence="2">
    <location>
        <begin position="412"/>
        <end position="621"/>
    </location>
</feature>
<feature type="modified residue" description="Phosphohistidine; by autocatalysis" evidence="2">
    <location>
        <position position="415"/>
    </location>
</feature>
<feature type="sequence conflict" description="In Ref. 1 and 6." evidence="4" ref="1 6">
    <original>H</original>
    <variation>N</variation>
    <location>
        <position position="3"/>
    </location>
</feature>
<feature type="sequence conflict" description="In Ref. 1; AAA63511/AAA63510." evidence="4" ref="1">
    <original>P</original>
    <variation>Q</variation>
    <location>
        <position position="102"/>
    </location>
</feature>
<feature type="sequence conflict" description="In Ref. 6." evidence="4" ref="6">
    <original>N</original>
    <variation>K</variation>
    <location>
        <position position="174"/>
    </location>
</feature>
<feature type="sequence conflict" description="In Ref. 1; AAA63511/AAA63510." evidence="4" ref="1">
    <original>L</original>
    <variation>I</variation>
    <location>
        <position position="504"/>
    </location>
</feature>
<feature type="sequence conflict" description="In Ref. 1; AAA63511/AAA63510." evidence="4" ref="1">
    <original>D</original>
    <variation>N</variation>
    <location>
        <position position="540"/>
    </location>
</feature>
<feature type="sequence conflict" description="In Ref. 1; AAA63511/AAA63510." evidence="4" ref="1">
    <original>EEAA</original>
    <variation>KAAP</variation>
    <location>
        <begin position="548"/>
        <end position="551"/>
    </location>
</feature>
<feature type="sequence conflict" description="In Ref. 1; AAA63511/AAA63510." evidence="4" ref="1">
    <original>A</original>
    <variation>T</variation>
    <location>
        <position position="615"/>
    </location>
</feature>
<feature type="helix" evidence="6">
    <location>
        <begin position="56"/>
        <end position="79"/>
    </location>
</feature>
<feature type="helix" evidence="6">
    <location>
        <begin position="81"/>
        <end position="87"/>
    </location>
</feature>
<feature type="helix" evidence="6">
    <location>
        <begin position="90"/>
        <end position="97"/>
    </location>
</feature>
<feature type="helix" evidence="6">
    <location>
        <begin position="101"/>
        <end position="117"/>
    </location>
</feature>
<feature type="strand" evidence="6">
    <location>
        <begin position="121"/>
        <end position="127"/>
    </location>
</feature>
<feature type="strand" evidence="6">
    <location>
        <begin position="130"/>
        <end position="135"/>
    </location>
</feature>
<feature type="turn" evidence="6">
    <location>
        <begin position="136"/>
        <end position="139"/>
    </location>
</feature>
<feature type="helix" evidence="6">
    <location>
        <begin position="153"/>
        <end position="161"/>
    </location>
</feature>
<feature type="strand" evidence="6">
    <location>
        <begin position="162"/>
        <end position="169"/>
    </location>
</feature>
<feature type="turn" evidence="6">
    <location>
        <begin position="171"/>
        <end position="173"/>
    </location>
</feature>
<feature type="strand" evidence="6">
    <location>
        <begin position="176"/>
        <end position="186"/>
    </location>
</feature>
<feature type="strand" evidence="6">
    <location>
        <begin position="189"/>
        <end position="198"/>
    </location>
</feature>
<feature type="helix" evidence="6">
    <location>
        <begin position="201"/>
        <end position="210"/>
    </location>
</feature>
<feature type="strand" evidence="6">
    <location>
        <begin position="214"/>
        <end position="217"/>
    </location>
</feature>
<feature type="strand" evidence="6">
    <location>
        <begin position="222"/>
        <end position="228"/>
    </location>
</feature>
<feature type="helix" evidence="6">
    <location>
        <begin position="229"/>
        <end position="231"/>
    </location>
</feature>
<feature type="strand" evidence="6">
    <location>
        <begin position="235"/>
        <end position="237"/>
    </location>
</feature>
<feature type="helix" evidence="6">
    <location>
        <begin position="241"/>
        <end position="249"/>
    </location>
</feature>
<feature type="turn" evidence="6">
    <location>
        <begin position="250"/>
        <end position="255"/>
    </location>
</feature>
<feature type="strand" evidence="6">
    <location>
        <begin position="264"/>
        <end position="268"/>
    </location>
</feature>
<feature type="strand" evidence="6">
    <location>
        <begin position="274"/>
        <end position="278"/>
    </location>
</feature>
<feature type="strand" evidence="7">
    <location>
        <begin position="281"/>
        <end position="283"/>
    </location>
</feature>
<feature type="strand" evidence="6">
    <location>
        <begin position="286"/>
        <end position="294"/>
    </location>
</feature>
<feature type="turn" evidence="5">
    <location>
        <begin position="296"/>
        <end position="299"/>
    </location>
</feature>
<feature type="strand" evidence="6">
    <location>
        <begin position="301"/>
        <end position="307"/>
    </location>
</feature>
<feature type="helix" evidence="8">
    <location>
        <begin position="350"/>
        <end position="394"/>
    </location>
</feature>
<accession>P13633</accession>
<gene>
    <name type="primary">dctB</name>
    <name type="ordered locus">RB1524</name>
    <name type="ORF">SMb20612</name>
</gene>
<proteinExistence type="evidence at protein level"/>
<comment type="function">
    <text evidence="3">Member of the two-component regulatory system DctB/DctD involved in the transport of C4-dicarboxylates. DctB functions as a membrane-associated protein kinase that phosphorylates DctD in response to environmental signals.</text>
</comment>
<comment type="catalytic activity">
    <reaction>
        <text>ATP + protein L-histidine = ADP + protein N-phospho-L-histidine.</text>
        <dbReference type="EC" id="2.7.13.3"/>
    </reaction>
</comment>
<comment type="subcellular location">
    <subcellularLocation>
        <location>Cell inner membrane</location>
        <topology>Multi-pass membrane protein</topology>
    </subcellularLocation>
</comment>
<comment type="PTM">
    <text evidence="3">Autophosphorylated.</text>
</comment>
<comment type="sequence caution" evidence="4">
    <conflict type="erroneous initiation">
        <sequence resource="EMBL-CDS" id="AAA26249"/>
    </conflict>
</comment>
<comment type="sequence caution" evidence="4">
    <conflict type="erroneous initiation">
        <sequence resource="EMBL-CDS" id="AAA63510"/>
    </conflict>
</comment>
<comment type="sequence caution" evidence="4">
    <conflict type="erroneous initiation">
        <sequence resource="EMBL-CDS" id="AAA63512"/>
    </conflict>
</comment>
<comment type="sequence caution" evidence="4">
    <conflict type="frameshift">
        <sequence resource="EMBL" id="M33555"/>
    </conflict>
</comment>
<dbReference type="EC" id="2.7.13.3"/>
<dbReference type="EMBL" id="J03683">
    <property type="protein sequence ID" value="AAA63511.1"/>
    <property type="molecule type" value="Genomic_DNA"/>
</dbReference>
<dbReference type="EMBL" id="J03683">
    <property type="protein sequence ID" value="AAA63510.1"/>
    <property type="status" value="ALT_INIT"/>
    <property type="molecule type" value="Genomic_DNA"/>
</dbReference>
<dbReference type="EMBL" id="J03683">
    <property type="protein sequence ID" value="AAA63512.1"/>
    <property type="status" value="ALT_INIT"/>
    <property type="molecule type" value="Genomic_DNA"/>
</dbReference>
<dbReference type="EMBL" id="M26531">
    <property type="protein sequence ID" value="AAA26249.1"/>
    <property type="status" value="ALT_INIT"/>
    <property type="molecule type" value="Genomic_DNA"/>
</dbReference>
<dbReference type="EMBL" id="AL591985">
    <property type="protein sequence ID" value="CAC49924.1"/>
    <property type="molecule type" value="Genomic_DNA"/>
</dbReference>
<dbReference type="EMBL" id="M26399">
    <property type="protein sequence ID" value="AAA26251.2"/>
    <property type="molecule type" value="Genomic_DNA"/>
</dbReference>
<dbReference type="EMBL" id="M33555">
    <property type="status" value="NOT_ANNOTATED_CDS"/>
    <property type="molecule type" value="Genomic_DNA"/>
</dbReference>
<dbReference type="PIR" id="B33586">
    <property type="entry name" value="B33586"/>
</dbReference>
<dbReference type="PIR" id="D96032">
    <property type="entry name" value="D96032"/>
</dbReference>
<dbReference type="RefSeq" id="NP_438064.1">
    <property type="nucleotide sequence ID" value="NC_003078.1"/>
</dbReference>
<dbReference type="RefSeq" id="WP_010976309.1">
    <property type="nucleotide sequence ID" value="NC_003078.1"/>
</dbReference>
<dbReference type="PDB" id="2ZBB">
    <property type="method" value="X-ray"/>
    <property type="resolution" value="2.50 A"/>
    <property type="chains" value="A/B/C/D=42-312"/>
</dbReference>
<dbReference type="PDB" id="3E4O">
    <property type="method" value="X-ray"/>
    <property type="resolution" value="2.30 A"/>
    <property type="chains" value="A/B=42-312"/>
</dbReference>
<dbReference type="PDB" id="3E4P">
    <property type="method" value="X-ray"/>
    <property type="resolution" value="2.30 A"/>
    <property type="chains" value="A/B=42-312"/>
</dbReference>
<dbReference type="PDB" id="3E4Q">
    <property type="method" value="X-ray"/>
    <property type="resolution" value="2.75 A"/>
    <property type="chains" value="A/B=42-312"/>
</dbReference>
<dbReference type="PDB" id="4GKG">
    <property type="method" value="X-ray"/>
    <property type="resolution" value="1.70 A"/>
    <property type="chains" value="A/F=350-395"/>
</dbReference>
<dbReference type="PDBsum" id="2ZBB"/>
<dbReference type="PDBsum" id="3E4O"/>
<dbReference type="PDBsum" id="3E4P"/>
<dbReference type="PDBsum" id="3E4Q"/>
<dbReference type="PDBsum" id="4GKG"/>
<dbReference type="SMR" id="P13633"/>
<dbReference type="EnsemblBacteria" id="CAC49924">
    <property type="protein sequence ID" value="CAC49924"/>
    <property type="gene ID" value="SM_b20612"/>
</dbReference>
<dbReference type="KEGG" id="sme:SM_b20612"/>
<dbReference type="PATRIC" id="fig|266834.11.peg.6449"/>
<dbReference type="eggNOG" id="COG4191">
    <property type="taxonomic scope" value="Bacteria"/>
</dbReference>
<dbReference type="HOGENOM" id="CLU_000445_94_2_5"/>
<dbReference type="OrthoDB" id="7568856at2"/>
<dbReference type="BRENDA" id="2.7.13.3">
    <property type="organism ID" value="5347"/>
</dbReference>
<dbReference type="EvolutionaryTrace" id="P13633"/>
<dbReference type="Proteomes" id="UP000001976">
    <property type="component" value="Plasmid pSymB"/>
</dbReference>
<dbReference type="GO" id="GO:0005886">
    <property type="term" value="C:plasma membrane"/>
    <property type="evidence" value="ECO:0007669"/>
    <property type="project" value="UniProtKB-SubCell"/>
</dbReference>
<dbReference type="GO" id="GO:0005524">
    <property type="term" value="F:ATP binding"/>
    <property type="evidence" value="ECO:0007669"/>
    <property type="project" value="UniProtKB-KW"/>
</dbReference>
<dbReference type="GO" id="GO:0000155">
    <property type="term" value="F:phosphorelay sensor kinase activity"/>
    <property type="evidence" value="ECO:0007669"/>
    <property type="project" value="InterPro"/>
</dbReference>
<dbReference type="CDD" id="cd00075">
    <property type="entry name" value="HATPase"/>
    <property type="match status" value="1"/>
</dbReference>
<dbReference type="CDD" id="cd00082">
    <property type="entry name" value="HisKA"/>
    <property type="match status" value="1"/>
</dbReference>
<dbReference type="CDD" id="cd12914">
    <property type="entry name" value="PDC1_DGC_like"/>
    <property type="match status" value="1"/>
</dbReference>
<dbReference type="FunFam" id="1.10.287.130:FF:000049">
    <property type="entry name" value="C4-dicarboxylate transport sensor protein DctB"/>
    <property type="match status" value="1"/>
</dbReference>
<dbReference type="Gene3D" id="1.10.287.130">
    <property type="match status" value="1"/>
</dbReference>
<dbReference type="Gene3D" id="1.20.5.170">
    <property type="match status" value="1"/>
</dbReference>
<dbReference type="Gene3D" id="6.10.250.3020">
    <property type="match status" value="1"/>
</dbReference>
<dbReference type="Gene3D" id="3.30.565.10">
    <property type="entry name" value="Histidine kinase-like ATPase, C-terminal domain"/>
    <property type="match status" value="1"/>
</dbReference>
<dbReference type="Gene3D" id="3.30.450.20">
    <property type="entry name" value="PAS domain"/>
    <property type="match status" value="2"/>
</dbReference>
<dbReference type="InterPro" id="IPR036890">
    <property type="entry name" value="HATPase_C_sf"/>
</dbReference>
<dbReference type="InterPro" id="IPR005467">
    <property type="entry name" value="His_kinase_dom"/>
</dbReference>
<dbReference type="InterPro" id="IPR003661">
    <property type="entry name" value="HisK_dim/P_dom"/>
</dbReference>
<dbReference type="InterPro" id="IPR036097">
    <property type="entry name" value="HisK_dim/P_sf"/>
</dbReference>
<dbReference type="InterPro" id="IPR029151">
    <property type="entry name" value="Sensor-like_sf"/>
</dbReference>
<dbReference type="InterPro" id="IPR004358">
    <property type="entry name" value="Sig_transdc_His_kin-like_C"/>
</dbReference>
<dbReference type="InterPro" id="IPR017055">
    <property type="entry name" value="Sig_transdc_His_kinase_DctB"/>
</dbReference>
<dbReference type="PANTHER" id="PTHR43065:SF46">
    <property type="entry name" value="C4-DICARBOXYLATE TRANSPORT SENSOR PROTEIN DCTB"/>
    <property type="match status" value="1"/>
</dbReference>
<dbReference type="PANTHER" id="PTHR43065">
    <property type="entry name" value="SENSOR HISTIDINE KINASE"/>
    <property type="match status" value="1"/>
</dbReference>
<dbReference type="Pfam" id="PF02518">
    <property type="entry name" value="HATPase_c"/>
    <property type="match status" value="1"/>
</dbReference>
<dbReference type="Pfam" id="PF00512">
    <property type="entry name" value="HisKA"/>
    <property type="match status" value="1"/>
</dbReference>
<dbReference type="PIRSF" id="PIRSF036431">
    <property type="entry name" value="STHK_DctB"/>
    <property type="match status" value="1"/>
</dbReference>
<dbReference type="PRINTS" id="PR00344">
    <property type="entry name" value="BCTRLSENSOR"/>
</dbReference>
<dbReference type="SMART" id="SM00387">
    <property type="entry name" value="HATPase_c"/>
    <property type="match status" value="1"/>
</dbReference>
<dbReference type="SMART" id="SM00388">
    <property type="entry name" value="HisKA"/>
    <property type="match status" value="1"/>
</dbReference>
<dbReference type="SUPFAM" id="SSF55874">
    <property type="entry name" value="ATPase domain of HSP90 chaperone/DNA topoisomerase II/histidine kinase"/>
    <property type="match status" value="1"/>
</dbReference>
<dbReference type="SUPFAM" id="SSF47384">
    <property type="entry name" value="Homodimeric domain of signal transducing histidine kinase"/>
    <property type="match status" value="1"/>
</dbReference>
<dbReference type="SUPFAM" id="SSF103190">
    <property type="entry name" value="Sensory domain-like"/>
    <property type="match status" value="1"/>
</dbReference>
<dbReference type="PROSITE" id="PS50109">
    <property type="entry name" value="HIS_KIN"/>
    <property type="match status" value="1"/>
</dbReference>
<reference key="1">
    <citation type="journal article" date="1990" name="Mol. Plant Microbe Interact.">
        <title>Analysis of the C4-dicarboxylate transport genes of Rhizobium meliloti: nucleotide sequence and deduced products of dctA, dctB, and dctD.</title>
        <authorList>
            <person name="Watson R.J."/>
        </authorList>
    </citation>
    <scope>NUCLEOTIDE SEQUENCE [GENOMIC DNA]</scope>
    <source>
        <strain>JJ1c10</strain>
    </source>
</reference>
<reference key="2">
    <citation type="journal article" date="1989" name="J. Bacteriol.">
        <title>Conservation between coding and regulatory elements of Rhizobium meliloti and Rhizobium leguminosarum dct genes.</title>
        <authorList>
            <person name="Jiang J."/>
            <person name="Gu B."/>
            <person name="Albright L.M."/>
            <person name="Nixon B.T."/>
        </authorList>
    </citation>
    <scope>NUCLEOTIDE SEQUENCE [GENOMIC DNA]</scope>
    <source>
        <strain>1021</strain>
    </source>
</reference>
<reference key="3">
    <citation type="journal article" date="2001" name="Proc. Natl. Acad. Sci. U.S.A.">
        <title>The complete sequence of the 1,683-kb pSymB megaplasmid from the N2-fixing endosymbiont Sinorhizobium meliloti.</title>
        <authorList>
            <person name="Finan T.M."/>
            <person name="Weidner S."/>
            <person name="Wong K."/>
            <person name="Buhrmester J."/>
            <person name="Chain P."/>
            <person name="Vorhoelter F.J."/>
            <person name="Hernandez-Lucas I."/>
            <person name="Becker A."/>
            <person name="Cowie A."/>
            <person name="Gouzy J."/>
            <person name="Golding B."/>
            <person name="Puehler A."/>
        </authorList>
    </citation>
    <scope>NUCLEOTIDE SEQUENCE [LARGE SCALE GENOMIC DNA]</scope>
    <source>
        <strain>1021</strain>
    </source>
</reference>
<reference key="4">
    <citation type="journal article" date="2001" name="Science">
        <title>The composite genome of the legume symbiont Sinorhizobium meliloti.</title>
        <authorList>
            <person name="Galibert F."/>
            <person name="Finan T.M."/>
            <person name="Long S.R."/>
            <person name="Puehler A."/>
            <person name="Abola P."/>
            <person name="Ampe F."/>
            <person name="Barloy-Hubler F."/>
            <person name="Barnett M.J."/>
            <person name="Becker A."/>
            <person name="Boistard P."/>
            <person name="Bothe G."/>
            <person name="Boutry M."/>
            <person name="Bowser L."/>
            <person name="Buhrmester J."/>
            <person name="Cadieu E."/>
            <person name="Capela D."/>
            <person name="Chain P."/>
            <person name="Cowie A."/>
            <person name="Davis R.W."/>
            <person name="Dreano S."/>
            <person name="Federspiel N.A."/>
            <person name="Fisher R.F."/>
            <person name="Gloux S."/>
            <person name="Godrie T."/>
            <person name="Goffeau A."/>
            <person name="Golding B."/>
            <person name="Gouzy J."/>
            <person name="Gurjal M."/>
            <person name="Hernandez-Lucas I."/>
            <person name="Hong A."/>
            <person name="Huizar L."/>
            <person name="Hyman R.W."/>
            <person name="Jones T."/>
            <person name="Kahn D."/>
            <person name="Kahn M.L."/>
            <person name="Kalman S."/>
            <person name="Keating D.H."/>
            <person name="Kiss E."/>
            <person name="Komp C."/>
            <person name="Lelaure V."/>
            <person name="Masuy D."/>
            <person name="Palm C."/>
            <person name="Peck M.C."/>
            <person name="Pohl T.M."/>
            <person name="Portetelle D."/>
            <person name="Purnelle B."/>
            <person name="Ramsperger U."/>
            <person name="Surzycki R."/>
            <person name="Thebault P."/>
            <person name="Vandenbol M."/>
            <person name="Vorhoelter F.J."/>
            <person name="Weidner S."/>
            <person name="Wells D.H."/>
            <person name="Wong K."/>
            <person name="Yeh K.-C."/>
            <person name="Batut J."/>
        </authorList>
    </citation>
    <scope>NUCLEOTIDE SEQUENCE [LARGE SCALE GENOMIC DNA]</scope>
    <source>
        <strain>1021</strain>
    </source>
</reference>
<reference key="5">
    <citation type="journal article" date="1989" name="J. Bacteriol.">
        <title>Identification and sequence analysis of the Rhizobium meliloti dctA gene encoding the C4-dicarboxylate carrier.</title>
        <authorList>
            <person name="Engelke T."/>
            <person name="Jording D."/>
            <person name="Kapp D."/>
            <person name="Puehler A."/>
        </authorList>
    </citation>
    <scope>NUCLEOTIDE SEQUENCE [GENOMIC DNA] OF 1-185</scope>
    <source>
        <strain>RCR2011 / SU47</strain>
    </source>
</reference>
<reference key="6">
    <citation type="journal article" date="1989" name="Gene">
        <title>Genetic analysis and regulation of the Rhizobium meliloti genes controlling C4-dicarboxylic acid transport.</title>
        <authorList>
            <person name="Wang Y.-P."/>
            <person name="Birkenhead K."/>
            <person name="Boesten B."/>
            <person name="Manian S."/>
            <person name="O'Gara F."/>
        </authorList>
    </citation>
    <scope>NUCLEOTIDE SEQUENCE [GENOMIC DNA] OF 1-177</scope>
</reference>
<reference key="7">
    <citation type="journal article" date="1995" name="FEMS Microbiol. Lett.">
        <title>Signal transduction in the Rhizobium meliloti dicarboxylic acid transport system.</title>
        <authorList>
            <person name="Giblin L."/>
            <person name="Boesten B."/>
            <person name="Turk S."/>
            <person name="Hooykaas P."/>
            <person name="O'Gara F."/>
        </authorList>
    </citation>
    <scope>FUNCTION</scope>
    <scope>AUTOPHOSPHORYLATION</scope>
</reference>
<name>DCTB_RHIME</name>
<evidence type="ECO:0000255" key="1"/>
<evidence type="ECO:0000255" key="2">
    <source>
        <dbReference type="PROSITE-ProRule" id="PRU00107"/>
    </source>
</evidence>
<evidence type="ECO:0000269" key="3">
    <source>
    </source>
</evidence>
<evidence type="ECO:0000305" key="4"/>
<evidence type="ECO:0007829" key="5">
    <source>
        <dbReference type="PDB" id="2ZBB"/>
    </source>
</evidence>
<evidence type="ECO:0007829" key="6">
    <source>
        <dbReference type="PDB" id="3E4O"/>
    </source>
</evidence>
<evidence type="ECO:0007829" key="7">
    <source>
        <dbReference type="PDB" id="3E4P"/>
    </source>
</evidence>
<evidence type="ECO:0007829" key="8">
    <source>
        <dbReference type="PDB" id="4GKG"/>
    </source>
</evidence>